<sequence length="93" mass="10650">MKLFLVLIILLFEVLTDGARLKKCFNKVTGYCRKKCKVGERYEIGCLSGKLCCANDEEEKKHVSFKKPHQHSGEKLSVLQDYIILPTITIFTV</sequence>
<comment type="function">
    <text evidence="4">Has antibacterial activity.</text>
</comment>
<comment type="interaction">
    <interactant intactId="EBI-18310688">
        <id>Q7Z7B8</id>
    </interactant>
    <interactant intactId="EBI-18304435">
        <id>Q5JX71</id>
        <label>FAM209A</label>
    </interactant>
    <organismsDiffer>false</organismsDiffer>
    <experiments>3</experiments>
</comment>
<comment type="subcellular location">
    <subcellularLocation>
        <location evidence="4">Secreted</location>
    </subcellularLocation>
</comment>
<comment type="similarity">
    <text evidence="4">Belongs to the beta-defensin family.</text>
</comment>
<feature type="signal peptide" evidence="2">
    <location>
        <begin position="1"/>
        <end position="18"/>
    </location>
</feature>
<feature type="chain" id="PRO_0000007004" description="Beta-defensin 128">
    <location>
        <begin position="19"/>
        <end position="93"/>
    </location>
</feature>
<feature type="disulfide bond" evidence="1">
    <location>
        <begin position="24"/>
        <end position="52"/>
    </location>
</feature>
<feature type="disulfide bond" evidence="1">
    <location>
        <begin position="32"/>
        <end position="46"/>
    </location>
</feature>
<feature type="disulfide bond" evidence="1">
    <location>
        <begin position="36"/>
        <end position="53"/>
    </location>
</feature>
<feature type="sequence variant" id="VAR_048866" description="In dbSNP:rs4813043." evidence="3">
    <original>K</original>
    <variation>N</variation>
    <location>
        <position position="27"/>
    </location>
</feature>
<accession>Q7Z7B8</accession>
<accession>B2RU29</accession>
<dbReference type="EMBL" id="AF525930">
    <property type="protein sequence ID" value="AAP47223.1"/>
    <property type="molecule type" value="mRNA"/>
</dbReference>
<dbReference type="EMBL" id="AL360078">
    <property type="status" value="NOT_ANNOTATED_CDS"/>
    <property type="molecule type" value="Genomic_DNA"/>
</dbReference>
<dbReference type="EMBL" id="BC140936">
    <property type="protein sequence ID" value="AAI40937.1"/>
    <property type="molecule type" value="mRNA"/>
</dbReference>
<dbReference type="CCDS" id="CCDS33430.1"/>
<dbReference type="RefSeq" id="NP_001032821.1">
    <property type="nucleotide sequence ID" value="NM_001037732.3"/>
</dbReference>
<dbReference type="SMR" id="Q7Z7B8"/>
<dbReference type="BioGRID" id="128852">
    <property type="interactions" value="1"/>
</dbReference>
<dbReference type="FunCoup" id="Q7Z7B8">
    <property type="interactions" value="1"/>
</dbReference>
<dbReference type="IntAct" id="Q7Z7B8">
    <property type="interactions" value="1"/>
</dbReference>
<dbReference type="STRING" id="9606.ENSP00000335382"/>
<dbReference type="BioMuta" id="DEFB128"/>
<dbReference type="DMDM" id="61212983"/>
<dbReference type="PaxDb" id="9606-ENSP00000335382"/>
<dbReference type="Antibodypedia" id="82036">
    <property type="antibodies" value="1 antibodies from 1 providers"/>
</dbReference>
<dbReference type="DNASU" id="245939"/>
<dbReference type="Ensembl" id="ENST00000334391.5">
    <property type="protein sequence ID" value="ENSP00000335382.4"/>
    <property type="gene ID" value="ENSG00000185982.7"/>
</dbReference>
<dbReference type="GeneID" id="245939"/>
<dbReference type="KEGG" id="hsa:245939"/>
<dbReference type="MANE-Select" id="ENST00000334391.5">
    <property type="protein sequence ID" value="ENSP00000335382.4"/>
    <property type="RefSeq nucleotide sequence ID" value="NM_001037732.3"/>
    <property type="RefSeq protein sequence ID" value="NP_001032821.1"/>
</dbReference>
<dbReference type="UCSC" id="uc002wcz.2">
    <property type="organism name" value="human"/>
</dbReference>
<dbReference type="AGR" id="HGNC:18106"/>
<dbReference type="CTD" id="245939"/>
<dbReference type="GeneCards" id="DEFB128"/>
<dbReference type="HGNC" id="HGNC:18106">
    <property type="gene designation" value="DEFB128"/>
</dbReference>
<dbReference type="HPA" id="ENSG00000185982">
    <property type="expression patterns" value="Tissue enriched (epididymis)"/>
</dbReference>
<dbReference type="neXtProt" id="NX_Q7Z7B8"/>
<dbReference type="OpenTargets" id="ENSG00000185982"/>
<dbReference type="PharmGKB" id="PA38502"/>
<dbReference type="VEuPathDB" id="HostDB:ENSG00000185982"/>
<dbReference type="eggNOG" id="ENOG502TM18">
    <property type="taxonomic scope" value="Eukaryota"/>
</dbReference>
<dbReference type="GeneTree" id="ENSGT00530000064329"/>
<dbReference type="HOGENOM" id="CLU_2399087_0_0_1"/>
<dbReference type="InParanoid" id="Q7Z7B8"/>
<dbReference type="OMA" id="ISEMGCL"/>
<dbReference type="OrthoDB" id="9831336at2759"/>
<dbReference type="PAN-GO" id="Q7Z7B8">
    <property type="GO annotations" value="2 GO annotations based on evolutionary models"/>
</dbReference>
<dbReference type="PhylomeDB" id="Q7Z7B8"/>
<dbReference type="PathwayCommons" id="Q7Z7B8"/>
<dbReference type="Reactome" id="R-HSA-1461957">
    <property type="pathway name" value="Beta defensins"/>
</dbReference>
<dbReference type="Reactome" id="R-HSA-1461973">
    <property type="pathway name" value="Defensins"/>
</dbReference>
<dbReference type="SignaLink" id="Q7Z7B8"/>
<dbReference type="BioGRID-ORCS" id="245939">
    <property type="hits" value="46 hits in 1099 CRISPR screens"/>
</dbReference>
<dbReference type="GenomeRNAi" id="245939"/>
<dbReference type="Pharos" id="Q7Z7B8">
    <property type="development level" value="Tbio"/>
</dbReference>
<dbReference type="PRO" id="PR:Q7Z7B8"/>
<dbReference type="Proteomes" id="UP000005640">
    <property type="component" value="Chromosome 20"/>
</dbReference>
<dbReference type="RNAct" id="Q7Z7B8">
    <property type="molecule type" value="protein"/>
</dbReference>
<dbReference type="Bgee" id="ENSG00000185982">
    <property type="expression patterns" value="Expressed in granulocyte and 15 other cell types or tissues"/>
</dbReference>
<dbReference type="GO" id="GO:0005576">
    <property type="term" value="C:extracellular region"/>
    <property type="evidence" value="ECO:0007669"/>
    <property type="project" value="UniProtKB-SubCell"/>
</dbReference>
<dbReference type="GO" id="GO:0050829">
    <property type="term" value="P:defense response to Gram-negative bacterium"/>
    <property type="evidence" value="ECO:0000314"/>
    <property type="project" value="UniProtKB"/>
</dbReference>
<dbReference type="GO" id="GO:0050830">
    <property type="term" value="P:defense response to Gram-positive bacterium"/>
    <property type="evidence" value="ECO:0000314"/>
    <property type="project" value="UniProtKB"/>
</dbReference>
<dbReference type="GO" id="GO:0045087">
    <property type="term" value="P:innate immune response"/>
    <property type="evidence" value="ECO:0007669"/>
    <property type="project" value="InterPro"/>
</dbReference>
<dbReference type="GO" id="GO:0031640">
    <property type="term" value="P:killing of cells of another organism"/>
    <property type="evidence" value="ECO:0000314"/>
    <property type="project" value="UniProtKB"/>
</dbReference>
<dbReference type="InterPro" id="IPR050544">
    <property type="entry name" value="Beta-defensin"/>
</dbReference>
<dbReference type="InterPro" id="IPR025933">
    <property type="entry name" value="Beta_defensin_dom"/>
</dbReference>
<dbReference type="PANTHER" id="PTHR15001:SF3">
    <property type="entry name" value="BETA-DEFENSIN 123"/>
    <property type="match status" value="1"/>
</dbReference>
<dbReference type="PANTHER" id="PTHR15001">
    <property type="entry name" value="BETA-DEFENSIN 123-RELATED"/>
    <property type="match status" value="1"/>
</dbReference>
<dbReference type="Pfam" id="PF13841">
    <property type="entry name" value="Defensin_beta_2"/>
    <property type="match status" value="1"/>
</dbReference>
<proteinExistence type="evidence at protein level"/>
<evidence type="ECO:0000250" key="1"/>
<evidence type="ECO:0000255" key="2"/>
<evidence type="ECO:0000269" key="3">
    <source>
    </source>
</evidence>
<evidence type="ECO:0000305" key="4"/>
<protein>
    <recommendedName>
        <fullName>Beta-defensin 128</fullName>
    </recommendedName>
    <alternativeName>
        <fullName>Beta-defensin 28</fullName>
        <shortName>DEFB-28</shortName>
    </alternativeName>
    <alternativeName>
        <fullName>Defensin, beta 128</fullName>
    </alternativeName>
</protein>
<reference key="1">
    <citation type="journal article" date="2003" name="Genomics">
        <title>Distribution of new human beta-defensin genes clustered on chromosome 20 in functionally different segments of epididymis.</title>
        <authorList>
            <person name="Rodriguez-Jimenez F.-J."/>
            <person name="Krause A."/>
            <person name="Schulz S."/>
            <person name="Forssmann W.-G."/>
            <person name="Conejo-Garcia J.-R."/>
            <person name="Schreeb R."/>
            <person name="Motzkus D."/>
        </authorList>
    </citation>
    <scope>NUCLEOTIDE SEQUENCE [MRNA]</scope>
    <source>
        <tissue>Testis</tissue>
    </source>
</reference>
<reference key="2">
    <citation type="journal article" date="2001" name="Nature">
        <title>The DNA sequence and comparative analysis of human chromosome 20.</title>
        <authorList>
            <person name="Deloukas P."/>
            <person name="Matthews L.H."/>
            <person name="Ashurst J.L."/>
            <person name="Burton J."/>
            <person name="Gilbert J.G.R."/>
            <person name="Jones M."/>
            <person name="Stavrides G."/>
            <person name="Almeida J.P."/>
            <person name="Babbage A.K."/>
            <person name="Bagguley C.L."/>
            <person name="Bailey J."/>
            <person name="Barlow K.F."/>
            <person name="Bates K.N."/>
            <person name="Beard L.M."/>
            <person name="Beare D.M."/>
            <person name="Beasley O.P."/>
            <person name="Bird C.P."/>
            <person name="Blakey S.E."/>
            <person name="Bridgeman A.M."/>
            <person name="Brown A.J."/>
            <person name="Buck D."/>
            <person name="Burrill W.D."/>
            <person name="Butler A.P."/>
            <person name="Carder C."/>
            <person name="Carter N.P."/>
            <person name="Chapman J.C."/>
            <person name="Clamp M."/>
            <person name="Clark G."/>
            <person name="Clark L.N."/>
            <person name="Clark S.Y."/>
            <person name="Clee C.M."/>
            <person name="Clegg S."/>
            <person name="Cobley V.E."/>
            <person name="Collier R.E."/>
            <person name="Connor R.E."/>
            <person name="Corby N.R."/>
            <person name="Coulson A."/>
            <person name="Coville G.J."/>
            <person name="Deadman R."/>
            <person name="Dhami P.D."/>
            <person name="Dunn M."/>
            <person name="Ellington A.G."/>
            <person name="Frankland J.A."/>
            <person name="Fraser A."/>
            <person name="French L."/>
            <person name="Garner P."/>
            <person name="Grafham D.V."/>
            <person name="Griffiths C."/>
            <person name="Griffiths M.N.D."/>
            <person name="Gwilliam R."/>
            <person name="Hall R.E."/>
            <person name="Hammond S."/>
            <person name="Harley J.L."/>
            <person name="Heath P.D."/>
            <person name="Ho S."/>
            <person name="Holden J.L."/>
            <person name="Howden P.J."/>
            <person name="Huckle E."/>
            <person name="Hunt A.R."/>
            <person name="Hunt S.E."/>
            <person name="Jekosch K."/>
            <person name="Johnson C.M."/>
            <person name="Johnson D."/>
            <person name="Kay M.P."/>
            <person name="Kimberley A.M."/>
            <person name="King A."/>
            <person name="Knights A."/>
            <person name="Laird G.K."/>
            <person name="Lawlor S."/>
            <person name="Lehvaeslaiho M.H."/>
            <person name="Leversha M.A."/>
            <person name="Lloyd C."/>
            <person name="Lloyd D.M."/>
            <person name="Lovell J.D."/>
            <person name="Marsh V.L."/>
            <person name="Martin S.L."/>
            <person name="McConnachie L.J."/>
            <person name="McLay K."/>
            <person name="McMurray A.A."/>
            <person name="Milne S.A."/>
            <person name="Mistry D."/>
            <person name="Moore M.J.F."/>
            <person name="Mullikin J.C."/>
            <person name="Nickerson T."/>
            <person name="Oliver K."/>
            <person name="Parker A."/>
            <person name="Patel R."/>
            <person name="Pearce T.A.V."/>
            <person name="Peck A.I."/>
            <person name="Phillimore B.J.C.T."/>
            <person name="Prathalingam S.R."/>
            <person name="Plumb R.W."/>
            <person name="Ramsay H."/>
            <person name="Rice C.M."/>
            <person name="Ross M.T."/>
            <person name="Scott C.E."/>
            <person name="Sehra H.K."/>
            <person name="Shownkeen R."/>
            <person name="Sims S."/>
            <person name="Skuce C.D."/>
            <person name="Smith M.L."/>
            <person name="Soderlund C."/>
            <person name="Steward C.A."/>
            <person name="Sulston J.E."/>
            <person name="Swann R.M."/>
            <person name="Sycamore N."/>
            <person name="Taylor R."/>
            <person name="Tee L."/>
            <person name="Thomas D.W."/>
            <person name="Thorpe A."/>
            <person name="Tracey A."/>
            <person name="Tromans A.C."/>
            <person name="Vaudin M."/>
            <person name="Wall M."/>
            <person name="Wallis J.M."/>
            <person name="Whitehead S.L."/>
            <person name="Whittaker P."/>
            <person name="Willey D.L."/>
            <person name="Williams L."/>
            <person name="Williams S.A."/>
            <person name="Wilming L."/>
            <person name="Wray P.W."/>
            <person name="Hubbard T."/>
            <person name="Durbin R.M."/>
            <person name="Bentley D.R."/>
            <person name="Beck S."/>
            <person name="Rogers J."/>
        </authorList>
    </citation>
    <scope>NUCLEOTIDE SEQUENCE [LARGE SCALE GENOMIC DNA]</scope>
</reference>
<reference key="3">
    <citation type="journal article" date="2004" name="Genome Res.">
        <title>The status, quality, and expansion of the NIH full-length cDNA project: the Mammalian Gene Collection (MGC).</title>
        <authorList>
            <consortium name="The MGC Project Team"/>
        </authorList>
    </citation>
    <scope>NUCLEOTIDE SEQUENCE [LARGE SCALE MRNA]</scope>
    <scope>VARIANT ASN-27</scope>
</reference>
<keyword id="KW-0044">Antibiotic</keyword>
<keyword id="KW-0929">Antimicrobial</keyword>
<keyword id="KW-0211">Defensin</keyword>
<keyword id="KW-1015">Disulfide bond</keyword>
<keyword id="KW-1185">Reference proteome</keyword>
<keyword id="KW-0964">Secreted</keyword>
<keyword id="KW-0732">Signal</keyword>
<organism>
    <name type="scientific">Homo sapiens</name>
    <name type="common">Human</name>
    <dbReference type="NCBI Taxonomy" id="9606"/>
    <lineage>
        <taxon>Eukaryota</taxon>
        <taxon>Metazoa</taxon>
        <taxon>Chordata</taxon>
        <taxon>Craniata</taxon>
        <taxon>Vertebrata</taxon>
        <taxon>Euteleostomi</taxon>
        <taxon>Mammalia</taxon>
        <taxon>Eutheria</taxon>
        <taxon>Euarchontoglires</taxon>
        <taxon>Primates</taxon>
        <taxon>Haplorrhini</taxon>
        <taxon>Catarrhini</taxon>
        <taxon>Hominidae</taxon>
        <taxon>Homo</taxon>
    </lineage>
</organism>
<gene>
    <name type="primary">DEFB128</name>
    <name type="synonym">DEFB28</name>
</gene>
<name>DB128_HUMAN</name>